<name>VM3H_NAJAT</name>
<evidence type="ECO:0000250" key="1"/>
<evidence type="ECO:0000255" key="2"/>
<evidence type="ECO:0000255" key="3">
    <source>
        <dbReference type="PROSITE-ProRule" id="PRU00068"/>
    </source>
</evidence>
<evidence type="ECO:0000255" key="4">
    <source>
        <dbReference type="PROSITE-ProRule" id="PRU00276"/>
    </source>
</evidence>
<evidence type="ECO:0000269" key="5">
    <source>
    </source>
</evidence>
<evidence type="ECO:0000305" key="6"/>
<evidence type="ECO:0000305" key="7">
    <source>
    </source>
</evidence>
<evidence type="ECO:0007829" key="8">
    <source>
        <dbReference type="PDB" id="3K7L"/>
    </source>
</evidence>
<feature type="signal peptide" evidence="2">
    <location>
        <begin position="1"/>
        <end position="20"/>
    </location>
</feature>
<feature type="propeptide" id="PRO_5000578133" evidence="2">
    <location>
        <begin position="21"/>
        <end position="191"/>
    </location>
</feature>
<feature type="chain" id="PRO_5000578134" description="Zinc metalloproteinase-disintegrin-like atragin">
    <location>
        <begin position="192"/>
        <end position="613"/>
    </location>
</feature>
<feature type="domain" description="Peptidase M12B" evidence="4">
    <location>
        <begin position="205"/>
        <end position="400"/>
    </location>
</feature>
<feature type="domain" description="Disintegrin" evidence="3">
    <location>
        <begin position="408"/>
        <end position="494"/>
    </location>
</feature>
<feature type="region of interest" description="Hypervariable region that may play important roles toward cell migration">
    <location>
        <begin position="560"/>
        <end position="574"/>
    </location>
</feature>
<feature type="short sequence motif" description="D/ECD-tripeptide">
    <location>
        <begin position="472"/>
        <end position="474"/>
    </location>
</feature>
<feature type="binding site">
    <location>
        <position position="208"/>
    </location>
    <ligand>
        <name>Ca(2+)</name>
        <dbReference type="ChEBI" id="CHEBI:29108"/>
        <label>1</label>
    </ligand>
</feature>
<feature type="binding site">
    <location>
        <position position="292"/>
    </location>
    <ligand>
        <name>Ca(2+)</name>
        <dbReference type="ChEBI" id="CHEBI:29108"/>
        <label>1</label>
    </ligand>
</feature>
<feature type="binding site">
    <location>
        <position position="341"/>
    </location>
    <ligand>
        <name>Zn(2+)</name>
        <dbReference type="ChEBI" id="CHEBI:29105"/>
        <note>catalytic</note>
    </ligand>
</feature>
<feature type="binding site">
    <location>
        <position position="345"/>
    </location>
    <ligand>
        <name>Zn(2+)</name>
        <dbReference type="ChEBI" id="CHEBI:29105"/>
        <note>catalytic</note>
    </ligand>
</feature>
<feature type="binding site">
    <location>
        <position position="351"/>
    </location>
    <ligand>
        <name>Zn(2+)</name>
        <dbReference type="ChEBI" id="CHEBI:29105"/>
        <note>catalytic</note>
    </ligand>
</feature>
<feature type="binding site">
    <location>
        <position position="395"/>
    </location>
    <ligand>
        <name>Ca(2+)</name>
        <dbReference type="ChEBI" id="CHEBI:29108"/>
        <label>1</label>
    </ligand>
</feature>
<feature type="binding site">
    <location>
        <position position="398"/>
    </location>
    <ligand>
        <name>Ca(2+)</name>
        <dbReference type="ChEBI" id="CHEBI:29108"/>
        <label>1</label>
    </ligand>
</feature>
<feature type="binding site">
    <location>
        <position position="410"/>
    </location>
    <ligand>
        <name>Ca(2+)</name>
        <dbReference type="ChEBI" id="CHEBI:29108"/>
        <label>2</label>
    </ligand>
</feature>
<feature type="binding site">
    <location>
        <position position="413"/>
    </location>
    <ligand>
        <name>Ca(2+)</name>
        <dbReference type="ChEBI" id="CHEBI:29108"/>
        <label>2</label>
    </ligand>
</feature>
<feature type="binding site">
    <location>
        <position position="415"/>
    </location>
    <ligand>
        <name>Ca(2+)</name>
        <dbReference type="ChEBI" id="CHEBI:29108"/>
        <label>2</label>
    </ligand>
</feature>
<feature type="binding site">
    <location>
        <position position="417"/>
    </location>
    <ligand>
        <name>Ca(2+)</name>
        <dbReference type="ChEBI" id="CHEBI:29108"/>
        <label>2</label>
    </ligand>
</feature>
<feature type="binding site">
    <location>
        <position position="420"/>
    </location>
    <ligand>
        <name>Ca(2+)</name>
        <dbReference type="ChEBI" id="CHEBI:29108"/>
        <label>2</label>
    </ligand>
</feature>
<feature type="binding site">
    <location>
        <position position="423"/>
    </location>
    <ligand>
        <name>Ca(2+)</name>
        <dbReference type="ChEBI" id="CHEBI:29108"/>
        <label>2</label>
    </ligand>
</feature>
<feature type="binding site">
    <location>
        <position position="474"/>
    </location>
    <ligand>
        <name>Ca(2+)</name>
        <dbReference type="ChEBI" id="CHEBI:29108"/>
        <label>3</label>
    </ligand>
</feature>
<feature type="binding site">
    <location>
        <position position="475"/>
    </location>
    <ligand>
        <name>Ca(2+)</name>
        <dbReference type="ChEBI" id="CHEBI:29108"/>
        <label>3</label>
    </ligand>
</feature>
<feature type="binding site">
    <location>
        <position position="477"/>
    </location>
    <ligand>
        <name>Ca(2+)</name>
        <dbReference type="ChEBI" id="CHEBI:29108"/>
        <label>3</label>
    </ligand>
</feature>
<feature type="binding site">
    <location>
        <position position="489"/>
    </location>
    <ligand>
        <name>Ca(2+)</name>
        <dbReference type="ChEBI" id="CHEBI:29108"/>
        <label>3</label>
    </ligand>
</feature>
<feature type="binding site">
    <location>
        <position position="490"/>
    </location>
    <ligand>
        <name>Ca(2+)</name>
        <dbReference type="ChEBI" id="CHEBI:29108"/>
        <label>3</label>
    </ligand>
</feature>
<feature type="glycosylation site" description="N-linked (GlcNAc...) asparagine" evidence="5">
    <location>
        <position position="436"/>
    </location>
</feature>
<feature type="disulfide bond" evidence="5">
    <location>
        <begin position="316"/>
        <end position="395"/>
    </location>
</feature>
<feature type="disulfide bond" evidence="5">
    <location>
        <begin position="356"/>
        <end position="379"/>
    </location>
</feature>
<feature type="disulfide bond" evidence="5">
    <location>
        <begin position="411"/>
        <end position="440"/>
    </location>
</feature>
<feature type="disulfide bond" evidence="5">
    <location>
        <begin position="422"/>
        <end position="435"/>
    </location>
</feature>
<feature type="disulfide bond" evidence="5">
    <location>
        <begin position="424"/>
        <end position="430"/>
    </location>
</feature>
<feature type="disulfide bond" evidence="5">
    <location>
        <begin position="434"/>
        <end position="457"/>
    </location>
</feature>
<feature type="disulfide bond" evidence="5">
    <location>
        <begin position="448"/>
        <end position="454"/>
    </location>
</feature>
<feature type="disulfide bond" evidence="5">
    <location>
        <begin position="453"/>
        <end position="479"/>
    </location>
</feature>
<feature type="disulfide bond" evidence="5">
    <location>
        <begin position="466"/>
        <end position="486"/>
    </location>
</feature>
<feature type="disulfide bond" evidence="5">
    <location>
        <begin position="473"/>
        <end position="505"/>
    </location>
</feature>
<feature type="disulfide bond" evidence="5">
    <location>
        <begin position="498"/>
        <end position="510"/>
    </location>
</feature>
<feature type="disulfide bond" evidence="5">
    <location>
        <begin position="517"/>
        <end position="567"/>
    </location>
</feature>
<feature type="disulfide bond" evidence="5">
    <location>
        <begin position="532"/>
        <end position="575"/>
    </location>
</feature>
<feature type="disulfide bond" evidence="5">
    <location>
        <begin position="542"/>
        <end position="577"/>
    </location>
</feature>
<feature type="disulfide bond" evidence="5">
    <location>
        <begin position="545"/>
        <end position="555"/>
    </location>
</feature>
<feature type="disulfide bond" evidence="5">
    <location>
        <begin position="562"/>
        <end position="601"/>
    </location>
</feature>
<feature type="disulfide bond" evidence="5">
    <location>
        <begin position="595"/>
        <end position="606"/>
    </location>
</feature>
<feature type="helix" evidence="8">
    <location>
        <begin position="195"/>
        <end position="200"/>
    </location>
</feature>
<feature type="strand" evidence="8">
    <location>
        <begin position="205"/>
        <end position="213"/>
    </location>
</feature>
<feature type="helix" evidence="8">
    <location>
        <begin position="215"/>
        <end position="220"/>
    </location>
</feature>
<feature type="turn" evidence="8">
    <location>
        <begin position="221"/>
        <end position="223"/>
    </location>
</feature>
<feature type="helix" evidence="8">
    <location>
        <begin position="225"/>
        <end position="243"/>
    </location>
</feature>
<feature type="helix" evidence="8">
    <location>
        <begin position="244"/>
        <end position="246"/>
    </location>
</feature>
<feature type="strand" evidence="8">
    <location>
        <begin position="248"/>
        <end position="257"/>
    </location>
</feature>
<feature type="helix" evidence="8">
    <location>
        <begin position="270"/>
        <end position="283"/>
    </location>
</feature>
<feature type="helix" evidence="8">
    <location>
        <begin position="286"/>
        <end position="288"/>
    </location>
</feature>
<feature type="strand" evidence="8">
    <location>
        <begin position="292"/>
        <end position="298"/>
    </location>
</feature>
<feature type="strand" evidence="8">
    <location>
        <begin position="303"/>
        <end position="305"/>
    </location>
</feature>
<feature type="strand" evidence="8">
    <location>
        <begin position="307"/>
        <end position="310"/>
    </location>
</feature>
<feature type="turn" evidence="8">
    <location>
        <begin position="318"/>
        <end position="320"/>
    </location>
</feature>
<feature type="strand" evidence="8">
    <location>
        <begin position="323"/>
        <end position="326"/>
    </location>
</feature>
<feature type="helix" evidence="8">
    <location>
        <begin position="332"/>
        <end position="346"/>
    </location>
</feature>
<feature type="helix" evidence="8">
    <location>
        <begin position="378"/>
        <end position="391"/>
    </location>
</feature>
<feature type="helix" evidence="8">
    <location>
        <begin position="395"/>
        <end position="397"/>
    </location>
</feature>
<feature type="helix" evidence="8">
    <location>
        <begin position="402"/>
        <end position="404"/>
    </location>
</feature>
<feature type="strand" evidence="8">
    <location>
        <begin position="413"/>
        <end position="415"/>
    </location>
</feature>
<feature type="turn" evidence="8">
    <location>
        <begin position="427"/>
        <end position="429"/>
    </location>
</feature>
<feature type="strand" evidence="8">
    <location>
        <begin position="433"/>
        <end position="436"/>
    </location>
</feature>
<feature type="turn" evidence="8">
    <location>
        <begin position="437"/>
        <end position="440"/>
    </location>
</feature>
<feature type="strand" evidence="8">
    <location>
        <begin position="449"/>
        <end position="451"/>
    </location>
</feature>
<feature type="strand" evidence="8">
    <location>
        <begin position="465"/>
        <end position="467"/>
    </location>
</feature>
<feature type="turn" evidence="8">
    <location>
        <begin position="499"/>
        <end position="502"/>
    </location>
</feature>
<feature type="helix" evidence="8">
    <location>
        <begin position="513"/>
        <end position="521"/>
    </location>
</feature>
<feature type="helix" evidence="8">
    <location>
        <begin position="530"/>
        <end position="537"/>
    </location>
</feature>
<feature type="strand" evidence="8">
    <location>
        <begin position="538"/>
        <end position="540"/>
    </location>
</feature>
<feature type="strand" evidence="8">
    <location>
        <begin position="545"/>
        <end position="548"/>
    </location>
</feature>
<feature type="strand" evidence="8">
    <location>
        <begin position="551"/>
        <end position="553"/>
    </location>
</feature>
<feature type="helix" evidence="8">
    <location>
        <begin position="557"/>
        <end position="562"/>
    </location>
</feature>
<feature type="turn" evidence="8">
    <location>
        <begin position="584"/>
        <end position="587"/>
    </location>
</feature>
<feature type="strand" evidence="8">
    <location>
        <begin position="594"/>
        <end position="596"/>
    </location>
</feature>
<feature type="strand" evidence="8">
    <location>
        <begin position="599"/>
        <end position="602"/>
    </location>
</feature>
<feature type="strand" evidence="8">
    <location>
        <begin position="605"/>
        <end position="608"/>
    </location>
</feature>
<feature type="helix" evidence="8">
    <location>
        <begin position="609"/>
        <end position="612"/>
    </location>
</feature>
<keyword id="KW-0002">3D-structure</keyword>
<keyword id="KW-0106">Calcium</keyword>
<keyword id="KW-0903">Direct protein sequencing</keyword>
<keyword id="KW-1015">Disulfide bond</keyword>
<keyword id="KW-0325">Glycoprotein</keyword>
<keyword id="KW-0378">Hydrolase</keyword>
<keyword id="KW-0479">Metal-binding</keyword>
<keyword id="KW-0482">Metalloprotease</keyword>
<keyword id="KW-0645">Protease</keyword>
<keyword id="KW-0964">Secreted</keyword>
<keyword id="KW-0732">Signal</keyword>
<keyword id="KW-0800">Toxin</keyword>
<keyword id="KW-0862">Zinc</keyword>
<keyword id="KW-0865">Zymogen</keyword>
<sequence length="613" mass="69180">MIQALLVIICLAVFPHQGSSIILESGNVNDYEVVYPQKVPALLKGGVQNPQPETKYEDTMRYEFQVNGEPVVLHLERNKGLFSEDYTETHYAPDGREITTSPPVQDHCYYHGYIQNEADSSAVISACDGLKGHFEHQGETYFIEPLKISNSEAHAIYKDENVENEDETPEICGVTETTWESDESIEKTSQLTNTPEQDRYLQAKKYIEFYVVVDNIMYRHYKRDQPVIKRKVYEMINTMNMIYRRLNFHIALIGLEIWSNINEINVQSDVRATLNLFGEWREKKLLPRKRNDNAQLLTGIDFNGTPVGLAYIGSICNPKTSAAVVQDYSSRTRMVAITMAHEMGHNLGMNHDRGFCTCGFNKCVMSTRRTKPAYQFSSCSVREHQRYLLRDRPQCILNKPLSTDIVSPPICGNYFVEVGEECDCGSPADCQSACCNATTCKLQHEAQCDSEECCEKCKFKGARAECRAAKDDCDLPELCTGQSAECPTDVFQRNGLPCQNNQGYCYNGKCPIMTNQCIALRGPGVKVSRDSCFTLNQRTRGCGLCRMEYGRKIPCAAKDVKCGRLFCKRRNSMICNCSISPRDPNYGMVEPGTKCGDGMVCSNRQCVDVKTAY</sequence>
<comment type="function">
    <text evidence="5">Snake venom zinc metalloproteinase that seems to inhibit cell migration. This activity is dominated by the local structure of the hyper-variable region.</text>
</comment>
<comment type="cofactor">
    <cofactor evidence="1">
        <name>Zn(2+)</name>
        <dbReference type="ChEBI" id="CHEBI:29105"/>
    </cofactor>
    <text evidence="1">Binds 1 zinc ion per subunit.</text>
</comment>
<comment type="subunit">
    <text evidence="5">Monomer.</text>
</comment>
<comment type="subcellular location">
    <subcellularLocation>
        <location>Secreted</location>
    </subcellularLocation>
</comment>
<comment type="tissue specificity">
    <text>Expressed by the venom gland.</text>
</comment>
<comment type="miscellaneous">
    <text evidence="7">Negative results: does not show autolytic activity, as encountered in viperid venoms. Does not show activity on TNF-alpha (TNF) (PubMed:19932752).</text>
</comment>
<comment type="similarity">
    <text evidence="6">Belongs to the venom metalloproteinase (M12B) family. P-III subfamily. P-IIIa sub-subfamily.</text>
</comment>
<organism>
    <name type="scientific">Naja atra</name>
    <name type="common">Chinese cobra</name>
    <dbReference type="NCBI Taxonomy" id="8656"/>
    <lineage>
        <taxon>Eukaryota</taxon>
        <taxon>Metazoa</taxon>
        <taxon>Chordata</taxon>
        <taxon>Craniata</taxon>
        <taxon>Vertebrata</taxon>
        <taxon>Euteleostomi</taxon>
        <taxon>Lepidosauria</taxon>
        <taxon>Squamata</taxon>
        <taxon>Bifurcata</taxon>
        <taxon>Unidentata</taxon>
        <taxon>Episquamata</taxon>
        <taxon>Toxicofera</taxon>
        <taxon>Serpentes</taxon>
        <taxon>Colubroidea</taxon>
        <taxon>Elapidae</taxon>
        <taxon>Elapinae</taxon>
        <taxon>Naja</taxon>
    </lineage>
</organism>
<accession>D3TTC2</accession>
<accession>D4AEP5</accession>
<reference key="1">
    <citation type="journal article" date="2010" name="J. Struct. Biol.">
        <title>Structures of two elapid snake venom metalloproteases with distinct activities highlight the disulfide patterns in the D domain of ADAMalysin family proteins.</title>
        <authorList>
            <person name="Guan H.-H."/>
            <person name="Goh K.S."/>
            <person name="Davamani F."/>
            <person name="Wu P.-L."/>
            <person name="Huang Y.W."/>
            <person name="Jeyakanthan J."/>
            <person name="Wu W.-G."/>
            <person name="Chen C.-J."/>
        </authorList>
    </citation>
    <scope>NUCLEOTIDE SEQUENCE [MRNA]</scope>
    <scope>PROTEIN SEQUENCE OF 192-201</scope>
    <scope>FUNCTION</scope>
    <scope>SUBUNIT X-RAY CRYSTALLOGRAPHY (2.50 ANGSTROMS) OF 192-613 IN COMPLEX WITH ZINC ION AND CALCIUM IONS</scope>
    <scope>GLYCOSYLATION AT ASN-436</scope>
    <scope>DISULFIDE BONDS</scope>
    <source>
        <tissue>Venom</tissue>
        <tissue>Venom gland</tissue>
    </source>
</reference>
<dbReference type="EC" id="3.4.24.-"/>
<dbReference type="EMBL" id="FJ177517">
    <property type="protein sequence ID" value="ACN50006.1"/>
    <property type="molecule type" value="mRNA"/>
</dbReference>
<dbReference type="PDB" id="3K7L">
    <property type="method" value="X-ray"/>
    <property type="resolution" value="2.50 A"/>
    <property type="chains" value="A=192-613"/>
</dbReference>
<dbReference type="PDBsum" id="3K7L"/>
<dbReference type="SMR" id="D3TTC2"/>
<dbReference type="MEROPS" id="M12.159"/>
<dbReference type="iPTMnet" id="D3TTC2"/>
<dbReference type="EvolutionaryTrace" id="D3TTC2"/>
<dbReference type="GO" id="GO:0005576">
    <property type="term" value="C:extracellular region"/>
    <property type="evidence" value="ECO:0007669"/>
    <property type="project" value="UniProtKB-SubCell"/>
</dbReference>
<dbReference type="GO" id="GO:0005886">
    <property type="term" value="C:plasma membrane"/>
    <property type="evidence" value="ECO:0007669"/>
    <property type="project" value="TreeGrafter"/>
</dbReference>
<dbReference type="GO" id="GO:0046872">
    <property type="term" value="F:metal ion binding"/>
    <property type="evidence" value="ECO:0007669"/>
    <property type="project" value="UniProtKB-KW"/>
</dbReference>
<dbReference type="GO" id="GO:0004222">
    <property type="term" value="F:metalloendopeptidase activity"/>
    <property type="evidence" value="ECO:0007669"/>
    <property type="project" value="InterPro"/>
</dbReference>
<dbReference type="GO" id="GO:0090729">
    <property type="term" value="F:toxin activity"/>
    <property type="evidence" value="ECO:0007669"/>
    <property type="project" value="UniProtKB-KW"/>
</dbReference>
<dbReference type="GO" id="GO:0006508">
    <property type="term" value="P:proteolysis"/>
    <property type="evidence" value="ECO:0007669"/>
    <property type="project" value="UniProtKB-KW"/>
</dbReference>
<dbReference type="CDD" id="cd04269">
    <property type="entry name" value="ZnMc_adamalysin_II_like"/>
    <property type="match status" value="1"/>
</dbReference>
<dbReference type="FunFam" id="3.40.390.10:FF:000002">
    <property type="entry name" value="Disintegrin and metalloproteinase domain-containing protein 22"/>
    <property type="match status" value="1"/>
</dbReference>
<dbReference type="FunFam" id="4.10.70.10:FF:000001">
    <property type="entry name" value="Disintegrin and metalloproteinase domain-containing protein 22"/>
    <property type="match status" value="1"/>
</dbReference>
<dbReference type="Gene3D" id="3.40.390.10">
    <property type="entry name" value="Collagenase (Catalytic Domain)"/>
    <property type="match status" value="1"/>
</dbReference>
<dbReference type="Gene3D" id="4.10.70.10">
    <property type="entry name" value="Disintegrin domain"/>
    <property type="match status" value="1"/>
</dbReference>
<dbReference type="InterPro" id="IPR006586">
    <property type="entry name" value="ADAM_Cys-rich"/>
</dbReference>
<dbReference type="InterPro" id="IPR001762">
    <property type="entry name" value="Disintegrin_dom"/>
</dbReference>
<dbReference type="InterPro" id="IPR036436">
    <property type="entry name" value="Disintegrin_dom_sf"/>
</dbReference>
<dbReference type="InterPro" id="IPR024079">
    <property type="entry name" value="MetalloPept_cat_dom_sf"/>
</dbReference>
<dbReference type="InterPro" id="IPR001590">
    <property type="entry name" value="Peptidase_M12B"/>
</dbReference>
<dbReference type="InterPro" id="IPR002870">
    <property type="entry name" value="Peptidase_M12B_N"/>
</dbReference>
<dbReference type="InterPro" id="IPR034027">
    <property type="entry name" value="Reprolysin_adamalysin"/>
</dbReference>
<dbReference type="PANTHER" id="PTHR11905">
    <property type="entry name" value="ADAM A DISINTEGRIN AND METALLOPROTEASE DOMAIN"/>
    <property type="match status" value="1"/>
</dbReference>
<dbReference type="PANTHER" id="PTHR11905:SF32">
    <property type="entry name" value="DISINTEGRIN AND METALLOPROTEINASE DOMAIN-CONTAINING PROTEIN 28"/>
    <property type="match status" value="1"/>
</dbReference>
<dbReference type="Pfam" id="PF08516">
    <property type="entry name" value="ADAM_CR"/>
    <property type="match status" value="1"/>
</dbReference>
<dbReference type="Pfam" id="PF00200">
    <property type="entry name" value="Disintegrin"/>
    <property type="match status" value="1"/>
</dbReference>
<dbReference type="Pfam" id="PF01562">
    <property type="entry name" value="Pep_M12B_propep"/>
    <property type="match status" value="1"/>
</dbReference>
<dbReference type="Pfam" id="PF01421">
    <property type="entry name" value="Reprolysin"/>
    <property type="match status" value="1"/>
</dbReference>
<dbReference type="PRINTS" id="PR00289">
    <property type="entry name" value="DISINTEGRIN"/>
</dbReference>
<dbReference type="SMART" id="SM00608">
    <property type="entry name" value="ACR"/>
    <property type="match status" value="1"/>
</dbReference>
<dbReference type="SMART" id="SM00050">
    <property type="entry name" value="DISIN"/>
    <property type="match status" value="1"/>
</dbReference>
<dbReference type="SUPFAM" id="SSF57552">
    <property type="entry name" value="Blood coagulation inhibitor (disintegrin)"/>
    <property type="match status" value="1"/>
</dbReference>
<dbReference type="SUPFAM" id="SSF55486">
    <property type="entry name" value="Metalloproteases ('zincins'), catalytic domain"/>
    <property type="match status" value="1"/>
</dbReference>
<dbReference type="PROSITE" id="PS50215">
    <property type="entry name" value="ADAM_MEPRO"/>
    <property type="match status" value="1"/>
</dbReference>
<dbReference type="PROSITE" id="PS50214">
    <property type="entry name" value="DISINTEGRIN_2"/>
    <property type="match status" value="1"/>
</dbReference>
<dbReference type="PROSITE" id="PS00142">
    <property type="entry name" value="ZINC_PROTEASE"/>
    <property type="match status" value="1"/>
</dbReference>
<proteinExistence type="evidence at protein level"/>
<protein>
    <recommendedName>
        <fullName>Zinc metalloproteinase-disintegrin-like atragin</fullName>
        <ecNumber>3.4.24.-</ecNumber>
    </recommendedName>
    <alternativeName>
        <fullName>Snake venom metalloproteinase</fullName>
        <shortName>SVMP</shortName>
    </alternativeName>
</protein>